<evidence type="ECO:0000255" key="1"/>
<evidence type="ECO:0000256" key="2">
    <source>
        <dbReference type="SAM" id="MobiDB-lite"/>
    </source>
</evidence>
<evidence type="ECO:0000305" key="3"/>
<reference key="1">
    <citation type="journal article" date="2005" name="Nature">
        <title>The genome of the social amoeba Dictyostelium discoideum.</title>
        <authorList>
            <person name="Eichinger L."/>
            <person name="Pachebat J.A."/>
            <person name="Gloeckner G."/>
            <person name="Rajandream M.A."/>
            <person name="Sucgang R."/>
            <person name="Berriman M."/>
            <person name="Song J."/>
            <person name="Olsen R."/>
            <person name="Szafranski K."/>
            <person name="Xu Q."/>
            <person name="Tunggal B."/>
            <person name="Kummerfeld S."/>
            <person name="Madera M."/>
            <person name="Konfortov B.A."/>
            <person name="Rivero F."/>
            <person name="Bankier A.T."/>
            <person name="Lehmann R."/>
            <person name="Hamlin N."/>
            <person name="Davies R."/>
            <person name="Gaudet P."/>
            <person name="Fey P."/>
            <person name="Pilcher K."/>
            <person name="Chen G."/>
            <person name="Saunders D."/>
            <person name="Sodergren E.J."/>
            <person name="Davis P."/>
            <person name="Kerhornou A."/>
            <person name="Nie X."/>
            <person name="Hall N."/>
            <person name="Anjard C."/>
            <person name="Hemphill L."/>
            <person name="Bason N."/>
            <person name="Farbrother P."/>
            <person name="Desany B."/>
            <person name="Just E."/>
            <person name="Morio T."/>
            <person name="Rost R."/>
            <person name="Churcher C.M."/>
            <person name="Cooper J."/>
            <person name="Haydock S."/>
            <person name="van Driessche N."/>
            <person name="Cronin A."/>
            <person name="Goodhead I."/>
            <person name="Muzny D.M."/>
            <person name="Mourier T."/>
            <person name="Pain A."/>
            <person name="Lu M."/>
            <person name="Harper D."/>
            <person name="Lindsay R."/>
            <person name="Hauser H."/>
            <person name="James K.D."/>
            <person name="Quiles M."/>
            <person name="Madan Babu M."/>
            <person name="Saito T."/>
            <person name="Buchrieser C."/>
            <person name="Wardroper A."/>
            <person name="Felder M."/>
            <person name="Thangavelu M."/>
            <person name="Johnson D."/>
            <person name="Knights A."/>
            <person name="Loulseged H."/>
            <person name="Mungall K.L."/>
            <person name="Oliver K."/>
            <person name="Price C."/>
            <person name="Quail M.A."/>
            <person name="Urushihara H."/>
            <person name="Hernandez J."/>
            <person name="Rabbinowitsch E."/>
            <person name="Steffen D."/>
            <person name="Sanders M."/>
            <person name="Ma J."/>
            <person name="Kohara Y."/>
            <person name="Sharp S."/>
            <person name="Simmonds M.N."/>
            <person name="Spiegler S."/>
            <person name="Tivey A."/>
            <person name="Sugano S."/>
            <person name="White B."/>
            <person name="Walker D."/>
            <person name="Woodward J.R."/>
            <person name="Winckler T."/>
            <person name="Tanaka Y."/>
            <person name="Shaulsky G."/>
            <person name="Schleicher M."/>
            <person name="Weinstock G.M."/>
            <person name="Rosenthal A."/>
            <person name="Cox E.C."/>
            <person name="Chisholm R.L."/>
            <person name="Gibbs R.A."/>
            <person name="Loomis W.F."/>
            <person name="Platzer M."/>
            <person name="Kay R.R."/>
            <person name="Williams J.G."/>
            <person name="Dear P.H."/>
            <person name="Noegel A.A."/>
            <person name="Barrell B.G."/>
            <person name="Kuspa A."/>
        </authorList>
    </citation>
    <scope>NUCLEOTIDE SEQUENCE [LARGE SCALE GENOMIC DNA]</scope>
    <source>
        <strain>AX4</strain>
    </source>
</reference>
<sequence length="517" mass="58104">MSKKKENPFSFFSYVKDESDTSSLPPPPAPIHSPSSSDNIEIPLPVFNNNNNNNNTTTTNNNTNNSNTSTSNNSKNNRKTAISFDDDDDDGDEEDEEEEDDDDDDDDDDDETNNIKSSLPQLQPQTQPQPQPQPQPQPQPPIKPTITKATPINKNVNKEINNNNNNNNNNNNTTTTTINNINNIATSANNAGTTTSKKKLIQLFDDDDTNYDDEEKLEKFDRSTPMSLPKEIPKKVSSTLSNSFDPNIIHNQSSPPPPPISIPIPLPTTDNLNNINSNNNNNNNNNNNNNNNNNNNNNNNNNNNNNNNNNNNNNNNNSNIAPPPPSSSSMVNNVNNNSSDNSSSNNNEENENLKAEITKLKTLIKGLKIQCIKYKGDKELSESKLLQSENRLEQFKLKEANETKIMEDMVAQVEENLNAMKKRAQYAENQVEQMKQEIQQLRHQNQQNSMNNPEMQELRYRLQDAKEKGRMVSQLLFQASNDADLNIKNLMRGIETLQNVSALLFSIDKISTIPNQK</sequence>
<feature type="chain" id="PRO_0000324289" description="Uncharacterized ENTR1 family protein">
    <location>
        <begin position="1"/>
        <end position="517"/>
    </location>
</feature>
<feature type="region of interest" description="Disordered" evidence="2">
    <location>
        <begin position="16"/>
        <end position="148"/>
    </location>
</feature>
<feature type="region of interest" description="Disordered" evidence="2">
    <location>
        <begin position="156"/>
        <end position="175"/>
    </location>
</feature>
<feature type="region of interest" description="Disordered" evidence="2">
    <location>
        <begin position="216"/>
        <end position="351"/>
    </location>
</feature>
<feature type="coiled-coil region" evidence="1">
    <location>
        <begin position="340"/>
        <end position="452"/>
    </location>
</feature>
<feature type="compositionally biased region" description="Low complexity" evidence="2">
    <location>
        <begin position="48"/>
        <end position="75"/>
    </location>
</feature>
<feature type="compositionally biased region" description="Acidic residues" evidence="2">
    <location>
        <begin position="84"/>
        <end position="112"/>
    </location>
</feature>
<feature type="compositionally biased region" description="Pro residues" evidence="2">
    <location>
        <begin position="127"/>
        <end position="143"/>
    </location>
</feature>
<feature type="compositionally biased region" description="Polar residues" evidence="2">
    <location>
        <begin position="236"/>
        <end position="252"/>
    </location>
</feature>
<feature type="compositionally biased region" description="Pro residues" evidence="2">
    <location>
        <begin position="254"/>
        <end position="266"/>
    </location>
</feature>
<feature type="compositionally biased region" description="Low complexity" evidence="2">
    <location>
        <begin position="271"/>
        <end position="320"/>
    </location>
</feature>
<feature type="compositionally biased region" description="Low complexity" evidence="2">
    <location>
        <begin position="327"/>
        <end position="347"/>
    </location>
</feature>
<comment type="similarity">
    <text evidence="3">Belongs to the ENTR1 family.</text>
</comment>
<organism>
    <name type="scientific">Dictyostelium discoideum</name>
    <name type="common">Social amoeba</name>
    <dbReference type="NCBI Taxonomy" id="44689"/>
    <lineage>
        <taxon>Eukaryota</taxon>
        <taxon>Amoebozoa</taxon>
        <taxon>Evosea</taxon>
        <taxon>Eumycetozoa</taxon>
        <taxon>Dictyostelia</taxon>
        <taxon>Dictyosteliales</taxon>
        <taxon>Dictyosteliaceae</taxon>
        <taxon>Dictyostelium</taxon>
    </lineage>
</organism>
<protein>
    <recommendedName>
        <fullName>Uncharacterized ENTR1 family protein</fullName>
    </recommendedName>
</protein>
<name>Y4579_DICDI</name>
<keyword id="KW-0175">Coiled coil</keyword>
<keyword id="KW-1185">Reference proteome</keyword>
<accession>Q54MB1</accession>
<gene>
    <name type="ORF">DDB_G0286065</name>
</gene>
<proteinExistence type="inferred from homology"/>
<dbReference type="EMBL" id="AAFI02000085">
    <property type="protein sequence ID" value="EAL64411.1"/>
    <property type="molecule type" value="Genomic_DNA"/>
</dbReference>
<dbReference type="RefSeq" id="XP_637923.1">
    <property type="nucleotide sequence ID" value="XM_632831.1"/>
</dbReference>
<dbReference type="SMR" id="Q54MB1"/>
<dbReference type="STRING" id="44689.Q54MB1"/>
<dbReference type="PaxDb" id="44689-DDB0186799"/>
<dbReference type="EnsemblProtists" id="EAL64411">
    <property type="protein sequence ID" value="EAL64411"/>
    <property type="gene ID" value="DDB_G0286065"/>
</dbReference>
<dbReference type="GeneID" id="8625434"/>
<dbReference type="KEGG" id="ddi:DDB_G0286065"/>
<dbReference type="dictyBase" id="DDB_G0286065"/>
<dbReference type="VEuPathDB" id="AmoebaDB:DDB_G0286065"/>
<dbReference type="eggNOG" id="ENOG502RHBA">
    <property type="taxonomic scope" value="Eukaryota"/>
</dbReference>
<dbReference type="HOGENOM" id="CLU_527272_0_0_1"/>
<dbReference type="InParanoid" id="Q54MB1"/>
<dbReference type="OMA" id="HEQSAYL"/>
<dbReference type="PRO" id="PR:Q54MB1"/>
<dbReference type="Proteomes" id="UP000002195">
    <property type="component" value="Chromosome 4"/>
</dbReference>
<dbReference type="GO" id="GO:0005813">
    <property type="term" value="C:centrosome"/>
    <property type="evidence" value="ECO:0000318"/>
    <property type="project" value="GO_Central"/>
</dbReference>
<dbReference type="GO" id="GO:0005769">
    <property type="term" value="C:early endosome"/>
    <property type="evidence" value="ECO:0000318"/>
    <property type="project" value="GO_Central"/>
</dbReference>
<dbReference type="GO" id="GO:0030496">
    <property type="term" value="C:midbody"/>
    <property type="evidence" value="ECO:0000318"/>
    <property type="project" value="GO_Central"/>
</dbReference>
<dbReference type="GO" id="GO:0055037">
    <property type="term" value="C:recycling endosome"/>
    <property type="evidence" value="ECO:0000318"/>
    <property type="project" value="GO_Central"/>
</dbReference>
<dbReference type="GO" id="GO:0032465">
    <property type="term" value="P:regulation of cytokinesis"/>
    <property type="evidence" value="ECO:0000318"/>
    <property type="project" value="GO_Central"/>
</dbReference>
<dbReference type="InterPro" id="IPR026757">
    <property type="entry name" value="ENTR1"/>
</dbReference>
<dbReference type="PANTHER" id="PTHR31259">
    <property type="entry name" value="ENDOSOME-ASSOCIATED TRAFFICKING REGULATOR 1"/>
    <property type="match status" value="1"/>
</dbReference>
<dbReference type="PANTHER" id="PTHR31259:SF3">
    <property type="entry name" value="ENDOSOME-ASSOCIATED-TRAFFICKING REGULATOR 1"/>
    <property type="match status" value="1"/>
</dbReference>